<reference key="1">
    <citation type="journal article" date="2006" name="Science">
        <title>A small microbial genome: the end of a long symbiotic relationship?</title>
        <authorList>
            <person name="Perez-Brocal V."/>
            <person name="Gil R."/>
            <person name="Ramos S."/>
            <person name="Lamelas A."/>
            <person name="Postigo M."/>
            <person name="Michelena J.M."/>
            <person name="Silva F.J."/>
            <person name="Moya A."/>
            <person name="Latorre A."/>
        </authorList>
    </citation>
    <scope>NUCLEOTIDE SEQUENCE [LARGE SCALE GENOMIC DNA]</scope>
    <source>
        <strain>Cc</strain>
    </source>
</reference>
<gene>
    <name evidence="1" type="primary">minC</name>
    <name type="ordered locus">BCc_205</name>
</gene>
<protein>
    <recommendedName>
        <fullName evidence="1">Probable septum site-determining protein MinC</fullName>
    </recommendedName>
</protein>
<organism>
    <name type="scientific">Buchnera aphidicola subsp. Cinara cedri (strain Cc)</name>
    <dbReference type="NCBI Taxonomy" id="372461"/>
    <lineage>
        <taxon>Bacteria</taxon>
        <taxon>Pseudomonadati</taxon>
        <taxon>Pseudomonadota</taxon>
        <taxon>Gammaproteobacteria</taxon>
        <taxon>Enterobacterales</taxon>
        <taxon>Erwiniaceae</taxon>
        <taxon>Buchnera</taxon>
    </lineage>
</organism>
<accession>Q057M2</accession>
<evidence type="ECO:0000255" key="1">
    <source>
        <dbReference type="HAMAP-Rule" id="MF_00267"/>
    </source>
</evidence>
<name>MINC_BUCCC</name>
<keyword id="KW-0131">Cell cycle</keyword>
<keyword id="KW-0132">Cell division</keyword>
<keyword id="KW-1185">Reference proteome</keyword>
<keyword id="KW-0717">Septation</keyword>
<proteinExistence type="inferred from homology"/>
<comment type="function">
    <text evidence="1">Cell division inhibitor that blocks the formation of polar Z ring septums. Rapidly oscillates between the poles of the cell to destabilize FtsZ filaments that have formed before they mature into polar Z rings. Prevents FtsZ polymerization.</text>
</comment>
<comment type="subunit">
    <text evidence="1">Interacts with MinD and FtsZ.</text>
</comment>
<comment type="similarity">
    <text evidence="1">Belongs to the MinC family.</text>
</comment>
<dbReference type="EMBL" id="CP000263">
    <property type="protein sequence ID" value="ABJ90677.1"/>
    <property type="molecule type" value="Genomic_DNA"/>
</dbReference>
<dbReference type="RefSeq" id="WP_011672596.1">
    <property type="nucleotide sequence ID" value="NC_008513.1"/>
</dbReference>
<dbReference type="SMR" id="Q057M2"/>
<dbReference type="STRING" id="372461.BCc_205"/>
<dbReference type="KEGG" id="bcc:BCc_205"/>
<dbReference type="eggNOG" id="COG0850">
    <property type="taxonomic scope" value="Bacteria"/>
</dbReference>
<dbReference type="HOGENOM" id="CLU_067812_0_1_6"/>
<dbReference type="OrthoDB" id="9794530at2"/>
<dbReference type="Proteomes" id="UP000000669">
    <property type="component" value="Chromosome"/>
</dbReference>
<dbReference type="GO" id="GO:0000902">
    <property type="term" value="P:cell morphogenesis"/>
    <property type="evidence" value="ECO:0007669"/>
    <property type="project" value="InterPro"/>
</dbReference>
<dbReference type="GO" id="GO:0000917">
    <property type="term" value="P:division septum assembly"/>
    <property type="evidence" value="ECO:0007669"/>
    <property type="project" value="UniProtKB-KW"/>
</dbReference>
<dbReference type="GO" id="GO:0051302">
    <property type="term" value="P:regulation of cell division"/>
    <property type="evidence" value="ECO:0007669"/>
    <property type="project" value="InterPro"/>
</dbReference>
<dbReference type="GO" id="GO:1901891">
    <property type="term" value="P:regulation of cell septum assembly"/>
    <property type="evidence" value="ECO:0007669"/>
    <property type="project" value="InterPro"/>
</dbReference>
<dbReference type="Gene3D" id="2.160.20.70">
    <property type="match status" value="1"/>
</dbReference>
<dbReference type="Gene3D" id="3.30.70.260">
    <property type="match status" value="1"/>
</dbReference>
<dbReference type="HAMAP" id="MF_00267">
    <property type="entry name" value="MinC"/>
    <property type="match status" value="1"/>
</dbReference>
<dbReference type="InterPro" id="IPR016098">
    <property type="entry name" value="CAP/MinC_C"/>
</dbReference>
<dbReference type="InterPro" id="IPR013033">
    <property type="entry name" value="MinC"/>
</dbReference>
<dbReference type="InterPro" id="IPR036145">
    <property type="entry name" value="MinC_C_sf"/>
</dbReference>
<dbReference type="InterPro" id="IPR007874">
    <property type="entry name" value="MinC_N"/>
</dbReference>
<dbReference type="InterPro" id="IPR005526">
    <property type="entry name" value="Septum_form_inhib_MinC_C"/>
</dbReference>
<dbReference type="NCBIfam" id="TIGR01222">
    <property type="entry name" value="minC"/>
    <property type="match status" value="1"/>
</dbReference>
<dbReference type="PANTHER" id="PTHR34108">
    <property type="entry name" value="SEPTUM SITE-DETERMINING PROTEIN MINC"/>
    <property type="match status" value="1"/>
</dbReference>
<dbReference type="PANTHER" id="PTHR34108:SF1">
    <property type="entry name" value="SEPTUM SITE-DETERMINING PROTEIN MINC"/>
    <property type="match status" value="1"/>
</dbReference>
<dbReference type="Pfam" id="PF03775">
    <property type="entry name" value="MinC_C"/>
    <property type="match status" value="1"/>
</dbReference>
<dbReference type="Pfam" id="PF05209">
    <property type="entry name" value="MinC_N"/>
    <property type="match status" value="1"/>
</dbReference>
<dbReference type="SUPFAM" id="SSF63848">
    <property type="entry name" value="Cell-division inhibitor MinC, C-terminal domain"/>
    <property type="match status" value="1"/>
</dbReference>
<sequence length="240" mass="27661">MKNKLITFKNNNFTALVIYLENINFKYFKKFLLKKIQKSPIFFKNIPIALNIEKLAFNFNWINLKKFFFSIGLFLIGIFGCKKESVKLDILKSGLPILFKKKKTLLNFNKKKNFFNKNSNKNHYSSLFIKNQKSYLVNELIRSGQRIYAPNTDLIITNNVSPGAELIADGNIHIYGNMKGRALAGAHGDETRKIFCTKLSAELISIAGEYCTVDQIPIKFLENSVEISLVNKKIFIKYNH</sequence>
<feature type="chain" id="PRO_1000047806" description="Probable septum site-determining protein MinC">
    <location>
        <begin position="1"/>
        <end position="240"/>
    </location>
</feature>